<dbReference type="EMBL" id="AK000972">
    <property type="protein sequence ID" value="BAA91449.1"/>
    <property type="molecule type" value="mRNA"/>
</dbReference>
<dbReference type="EMBL" id="AL158825">
    <property type="status" value="NOT_ANNOTATED_CDS"/>
    <property type="molecule type" value="Genomic_DNA"/>
</dbReference>
<dbReference type="EMBL" id="BC039588">
    <property type="protein sequence ID" value="AAH39588.1"/>
    <property type="molecule type" value="mRNA"/>
</dbReference>
<dbReference type="CCDS" id="CCDS6648.1"/>
<dbReference type="RefSeq" id="NP_060468.2">
    <property type="nucleotide sequence ID" value="NM_017998.3"/>
</dbReference>
<dbReference type="BioGRID" id="120388">
    <property type="interactions" value="35"/>
</dbReference>
<dbReference type="FunCoup" id="Q8IXQ3">
    <property type="interactions" value="318"/>
</dbReference>
<dbReference type="IntAct" id="Q8IXQ3">
    <property type="interactions" value="15"/>
</dbReference>
<dbReference type="STRING" id="9606.ENSP00000366050"/>
<dbReference type="iPTMnet" id="Q8IXQ3"/>
<dbReference type="PhosphoSitePlus" id="Q8IXQ3"/>
<dbReference type="BioMuta" id="C9orf40"/>
<dbReference type="DMDM" id="73620021"/>
<dbReference type="jPOST" id="Q8IXQ3"/>
<dbReference type="MassIVE" id="Q8IXQ3"/>
<dbReference type="PaxDb" id="9606-ENSP00000366050"/>
<dbReference type="PeptideAtlas" id="Q8IXQ3"/>
<dbReference type="ProteomicsDB" id="71036"/>
<dbReference type="Pumba" id="Q8IXQ3"/>
<dbReference type="TopDownProteomics" id="Q8IXQ3"/>
<dbReference type="Antibodypedia" id="43431">
    <property type="antibodies" value="60 antibodies from 13 providers"/>
</dbReference>
<dbReference type="DNASU" id="55071"/>
<dbReference type="Ensembl" id="ENST00000376854.6">
    <property type="protein sequence ID" value="ENSP00000366050.5"/>
    <property type="gene ID" value="ENSG00000135045.7"/>
</dbReference>
<dbReference type="GeneID" id="55071"/>
<dbReference type="KEGG" id="hsa:55071"/>
<dbReference type="MANE-Select" id="ENST00000376854.6">
    <property type="protein sequence ID" value="ENSP00000366050.5"/>
    <property type="RefSeq nucleotide sequence ID" value="NM_017998.3"/>
    <property type="RefSeq protein sequence ID" value="NP_060468.2"/>
</dbReference>
<dbReference type="UCSC" id="uc004ajo.5">
    <property type="organism name" value="human"/>
</dbReference>
<dbReference type="AGR" id="HGNC:23433"/>
<dbReference type="CTD" id="55071"/>
<dbReference type="GeneCards" id="C9orf40"/>
<dbReference type="HGNC" id="HGNC:23433">
    <property type="gene designation" value="C9orf40"/>
</dbReference>
<dbReference type="HPA" id="ENSG00000135045">
    <property type="expression patterns" value="Low tissue specificity"/>
</dbReference>
<dbReference type="neXtProt" id="NX_Q8IXQ3"/>
<dbReference type="OpenTargets" id="ENSG00000135045"/>
<dbReference type="PharmGKB" id="PA134870430"/>
<dbReference type="VEuPathDB" id="HostDB:ENSG00000135045"/>
<dbReference type="eggNOG" id="ENOG502SEFF">
    <property type="taxonomic scope" value="Eukaryota"/>
</dbReference>
<dbReference type="GeneTree" id="ENSGT00390000001325"/>
<dbReference type="HOGENOM" id="CLU_117698_1_0_1"/>
<dbReference type="InParanoid" id="Q8IXQ3"/>
<dbReference type="OMA" id="QLNEEFW"/>
<dbReference type="OrthoDB" id="8960251at2759"/>
<dbReference type="PAN-GO" id="Q8IXQ3">
    <property type="GO annotations" value="0 GO annotations based on evolutionary models"/>
</dbReference>
<dbReference type="PhylomeDB" id="Q8IXQ3"/>
<dbReference type="TreeFam" id="TF338442"/>
<dbReference type="PathwayCommons" id="Q8IXQ3"/>
<dbReference type="SignaLink" id="Q8IXQ3"/>
<dbReference type="BioGRID-ORCS" id="55071">
    <property type="hits" value="11 hits in 1146 CRISPR screens"/>
</dbReference>
<dbReference type="ChiTaRS" id="C9orf40">
    <property type="organism name" value="human"/>
</dbReference>
<dbReference type="GenomeRNAi" id="55071"/>
<dbReference type="Pharos" id="Q8IXQ3">
    <property type="development level" value="Tdark"/>
</dbReference>
<dbReference type="PRO" id="PR:Q8IXQ3"/>
<dbReference type="Proteomes" id="UP000005640">
    <property type="component" value="Chromosome 9"/>
</dbReference>
<dbReference type="RNAct" id="Q8IXQ3">
    <property type="molecule type" value="protein"/>
</dbReference>
<dbReference type="Bgee" id="ENSG00000135045">
    <property type="expression patterns" value="Expressed in secondary oocyte and 187 other cell types or tissues"/>
</dbReference>
<dbReference type="InterPro" id="IPR042349">
    <property type="entry name" value="C9orf40-like"/>
</dbReference>
<dbReference type="InterPro" id="IPR033461">
    <property type="entry name" value="WRNPLPNID"/>
</dbReference>
<dbReference type="PANTHER" id="PTHR16003">
    <property type="entry name" value="C9ORF40 ISOFORM 1"/>
    <property type="match status" value="1"/>
</dbReference>
<dbReference type="PANTHER" id="PTHR16003:SF3">
    <property type="entry name" value="CHROMOSOME 9 C9ORF40 HOMOLOG"/>
    <property type="match status" value="1"/>
</dbReference>
<dbReference type="Pfam" id="PF15017">
    <property type="entry name" value="WRNPLPNID"/>
    <property type="match status" value="1"/>
</dbReference>
<feature type="chain" id="PRO_0000089682" description="Uncharacterized protein C9orf40">
    <location>
        <begin position="1"/>
        <end position="194"/>
    </location>
</feature>
<feature type="region of interest" description="Disordered" evidence="1">
    <location>
        <begin position="45"/>
        <end position="138"/>
    </location>
</feature>
<feature type="compositionally biased region" description="Pro residues" evidence="1">
    <location>
        <begin position="97"/>
        <end position="106"/>
    </location>
</feature>
<feature type="compositionally biased region" description="Low complexity" evidence="1">
    <location>
        <begin position="107"/>
        <end position="116"/>
    </location>
</feature>
<feature type="compositionally biased region" description="Gly residues" evidence="1">
    <location>
        <begin position="117"/>
        <end position="128"/>
    </location>
</feature>
<feature type="modified residue" description="Phosphoserine" evidence="3 4 5">
    <location>
        <position position="69"/>
    </location>
</feature>
<feature type="modified residue" description="Phosphoserine" evidence="6">
    <location>
        <position position="76"/>
    </location>
</feature>
<feature type="sequence conflict" description="In Ref. 1; BAA91449." evidence="2" ref="1">
    <original>R</original>
    <variation>C</variation>
    <location>
        <position position="141"/>
    </location>
</feature>
<gene>
    <name type="primary">C9orf40</name>
</gene>
<evidence type="ECO:0000256" key="1">
    <source>
        <dbReference type="SAM" id="MobiDB-lite"/>
    </source>
</evidence>
<evidence type="ECO:0000305" key="2"/>
<evidence type="ECO:0007744" key="3">
    <source>
    </source>
</evidence>
<evidence type="ECO:0007744" key="4">
    <source>
    </source>
</evidence>
<evidence type="ECO:0007744" key="5">
    <source>
    </source>
</evidence>
<evidence type="ECO:0007744" key="6">
    <source>
    </source>
</evidence>
<organism>
    <name type="scientific">Homo sapiens</name>
    <name type="common">Human</name>
    <dbReference type="NCBI Taxonomy" id="9606"/>
    <lineage>
        <taxon>Eukaryota</taxon>
        <taxon>Metazoa</taxon>
        <taxon>Chordata</taxon>
        <taxon>Craniata</taxon>
        <taxon>Vertebrata</taxon>
        <taxon>Euteleostomi</taxon>
        <taxon>Mammalia</taxon>
        <taxon>Eutheria</taxon>
        <taxon>Euarchontoglires</taxon>
        <taxon>Primates</taxon>
        <taxon>Haplorrhini</taxon>
        <taxon>Catarrhini</taxon>
        <taxon>Hominidae</taxon>
        <taxon>Homo</taxon>
    </lineage>
</organism>
<name>CI040_HUMAN</name>
<protein>
    <recommendedName>
        <fullName>Uncharacterized protein C9orf40</fullName>
    </recommendedName>
</protein>
<proteinExistence type="evidence at protein level"/>
<keyword id="KW-0597">Phosphoprotein</keyword>
<keyword id="KW-1267">Proteomics identification</keyword>
<keyword id="KW-1185">Reference proteome</keyword>
<sequence length="194" mass="21063">MAKRRAAEPVTFHVPWKRLLLCDFAEQPPPPPLWIRPPGVAHAGQLLGVPEQHRKRKIDAGTMAEPSASPSKRRDSGDNSAPSGQEREDHGLETGDPPLPPPPVLPGPGEELPGARLPGGGGDDGAGRAGPPRGDWGVASRQHNEEFWQYNTFQYWRNPLPPIDLADIEDLSEDTLTEATLQGRNEGAEVDMES</sequence>
<accession>Q8IXQ3</accession>
<accession>Q9NWD3</accession>
<reference key="1">
    <citation type="journal article" date="2004" name="Nat. Genet.">
        <title>Complete sequencing and characterization of 21,243 full-length human cDNAs.</title>
        <authorList>
            <person name="Ota T."/>
            <person name="Suzuki Y."/>
            <person name="Nishikawa T."/>
            <person name="Otsuki T."/>
            <person name="Sugiyama T."/>
            <person name="Irie R."/>
            <person name="Wakamatsu A."/>
            <person name="Hayashi K."/>
            <person name="Sato H."/>
            <person name="Nagai K."/>
            <person name="Kimura K."/>
            <person name="Makita H."/>
            <person name="Sekine M."/>
            <person name="Obayashi M."/>
            <person name="Nishi T."/>
            <person name="Shibahara T."/>
            <person name="Tanaka T."/>
            <person name="Ishii S."/>
            <person name="Yamamoto J."/>
            <person name="Saito K."/>
            <person name="Kawai Y."/>
            <person name="Isono Y."/>
            <person name="Nakamura Y."/>
            <person name="Nagahari K."/>
            <person name="Murakami K."/>
            <person name="Yasuda T."/>
            <person name="Iwayanagi T."/>
            <person name="Wagatsuma M."/>
            <person name="Shiratori A."/>
            <person name="Sudo H."/>
            <person name="Hosoiri T."/>
            <person name="Kaku Y."/>
            <person name="Kodaira H."/>
            <person name="Kondo H."/>
            <person name="Sugawara M."/>
            <person name="Takahashi M."/>
            <person name="Kanda K."/>
            <person name="Yokoi T."/>
            <person name="Furuya T."/>
            <person name="Kikkawa E."/>
            <person name="Omura Y."/>
            <person name="Abe K."/>
            <person name="Kamihara K."/>
            <person name="Katsuta N."/>
            <person name="Sato K."/>
            <person name="Tanikawa M."/>
            <person name="Yamazaki M."/>
            <person name="Ninomiya K."/>
            <person name="Ishibashi T."/>
            <person name="Yamashita H."/>
            <person name="Murakawa K."/>
            <person name="Fujimori K."/>
            <person name="Tanai H."/>
            <person name="Kimata M."/>
            <person name="Watanabe M."/>
            <person name="Hiraoka S."/>
            <person name="Chiba Y."/>
            <person name="Ishida S."/>
            <person name="Ono Y."/>
            <person name="Takiguchi S."/>
            <person name="Watanabe S."/>
            <person name="Yosida M."/>
            <person name="Hotuta T."/>
            <person name="Kusano J."/>
            <person name="Kanehori K."/>
            <person name="Takahashi-Fujii A."/>
            <person name="Hara H."/>
            <person name="Tanase T.-O."/>
            <person name="Nomura Y."/>
            <person name="Togiya S."/>
            <person name="Komai F."/>
            <person name="Hara R."/>
            <person name="Takeuchi K."/>
            <person name="Arita M."/>
            <person name="Imose N."/>
            <person name="Musashino K."/>
            <person name="Yuuki H."/>
            <person name="Oshima A."/>
            <person name="Sasaki N."/>
            <person name="Aotsuka S."/>
            <person name="Yoshikawa Y."/>
            <person name="Matsunawa H."/>
            <person name="Ichihara T."/>
            <person name="Shiohata N."/>
            <person name="Sano S."/>
            <person name="Moriya S."/>
            <person name="Momiyama H."/>
            <person name="Satoh N."/>
            <person name="Takami S."/>
            <person name="Terashima Y."/>
            <person name="Suzuki O."/>
            <person name="Nakagawa S."/>
            <person name="Senoh A."/>
            <person name="Mizoguchi H."/>
            <person name="Goto Y."/>
            <person name="Shimizu F."/>
            <person name="Wakebe H."/>
            <person name="Hishigaki H."/>
            <person name="Watanabe T."/>
            <person name="Sugiyama A."/>
            <person name="Takemoto M."/>
            <person name="Kawakami B."/>
            <person name="Yamazaki M."/>
            <person name="Watanabe K."/>
            <person name="Kumagai A."/>
            <person name="Itakura S."/>
            <person name="Fukuzumi Y."/>
            <person name="Fujimori Y."/>
            <person name="Komiyama M."/>
            <person name="Tashiro H."/>
            <person name="Tanigami A."/>
            <person name="Fujiwara T."/>
            <person name="Ono T."/>
            <person name="Yamada K."/>
            <person name="Fujii Y."/>
            <person name="Ozaki K."/>
            <person name="Hirao M."/>
            <person name="Ohmori Y."/>
            <person name="Kawabata A."/>
            <person name="Hikiji T."/>
            <person name="Kobatake N."/>
            <person name="Inagaki H."/>
            <person name="Ikema Y."/>
            <person name="Okamoto S."/>
            <person name="Okitani R."/>
            <person name="Kawakami T."/>
            <person name="Noguchi S."/>
            <person name="Itoh T."/>
            <person name="Shigeta K."/>
            <person name="Senba T."/>
            <person name="Matsumura K."/>
            <person name="Nakajima Y."/>
            <person name="Mizuno T."/>
            <person name="Morinaga M."/>
            <person name="Sasaki M."/>
            <person name="Togashi T."/>
            <person name="Oyama M."/>
            <person name="Hata H."/>
            <person name="Watanabe M."/>
            <person name="Komatsu T."/>
            <person name="Mizushima-Sugano J."/>
            <person name="Satoh T."/>
            <person name="Shirai Y."/>
            <person name="Takahashi Y."/>
            <person name="Nakagawa K."/>
            <person name="Okumura K."/>
            <person name="Nagase T."/>
            <person name="Nomura N."/>
            <person name="Kikuchi H."/>
            <person name="Masuho Y."/>
            <person name="Yamashita R."/>
            <person name="Nakai K."/>
            <person name="Yada T."/>
            <person name="Nakamura Y."/>
            <person name="Ohara O."/>
            <person name="Isogai T."/>
            <person name="Sugano S."/>
        </authorList>
    </citation>
    <scope>NUCLEOTIDE SEQUENCE [LARGE SCALE MRNA]</scope>
    <source>
        <tissue>Embryo</tissue>
    </source>
</reference>
<reference key="2">
    <citation type="journal article" date="2004" name="Nature">
        <title>DNA sequence and analysis of human chromosome 9.</title>
        <authorList>
            <person name="Humphray S.J."/>
            <person name="Oliver K."/>
            <person name="Hunt A.R."/>
            <person name="Plumb R.W."/>
            <person name="Loveland J.E."/>
            <person name="Howe K.L."/>
            <person name="Andrews T.D."/>
            <person name="Searle S."/>
            <person name="Hunt S.E."/>
            <person name="Scott C.E."/>
            <person name="Jones M.C."/>
            <person name="Ainscough R."/>
            <person name="Almeida J.P."/>
            <person name="Ambrose K.D."/>
            <person name="Ashwell R.I.S."/>
            <person name="Babbage A.K."/>
            <person name="Babbage S."/>
            <person name="Bagguley C.L."/>
            <person name="Bailey J."/>
            <person name="Banerjee R."/>
            <person name="Barker D.J."/>
            <person name="Barlow K.F."/>
            <person name="Bates K."/>
            <person name="Beasley H."/>
            <person name="Beasley O."/>
            <person name="Bird C.P."/>
            <person name="Bray-Allen S."/>
            <person name="Brown A.J."/>
            <person name="Brown J.Y."/>
            <person name="Burford D."/>
            <person name="Burrill W."/>
            <person name="Burton J."/>
            <person name="Carder C."/>
            <person name="Carter N.P."/>
            <person name="Chapman J.C."/>
            <person name="Chen Y."/>
            <person name="Clarke G."/>
            <person name="Clark S.Y."/>
            <person name="Clee C.M."/>
            <person name="Clegg S."/>
            <person name="Collier R.E."/>
            <person name="Corby N."/>
            <person name="Crosier M."/>
            <person name="Cummings A.T."/>
            <person name="Davies J."/>
            <person name="Dhami P."/>
            <person name="Dunn M."/>
            <person name="Dutta I."/>
            <person name="Dyer L.W."/>
            <person name="Earthrowl M.E."/>
            <person name="Faulkner L."/>
            <person name="Fleming C.J."/>
            <person name="Frankish A."/>
            <person name="Frankland J.A."/>
            <person name="French L."/>
            <person name="Fricker D.G."/>
            <person name="Garner P."/>
            <person name="Garnett J."/>
            <person name="Ghori J."/>
            <person name="Gilbert J.G.R."/>
            <person name="Glison C."/>
            <person name="Grafham D.V."/>
            <person name="Gribble S."/>
            <person name="Griffiths C."/>
            <person name="Griffiths-Jones S."/>
            <person name="Grocock R."/>
            <person name="Guy J."/>
            <person name="Hall R.E."/>
            <person name="Hammond S."/>
            <person name="Harley J.L."/>
            <person name="Harrison E.S.I."/>
            <person name="Hart E.A."/>
            <person name="Heath P.D."/>
            <person name="Henderson C.D."/>
            <person name="Hopkins B.L."/>
            <person name="Howard P.J."/>
            <person name="Howden P.J."/>
            <person name="Huckle E."/>
            <person name="Johnson C."/>
            <person name="Johnson D."/>
            <person name="Joy A.A."/>
            <person name="Kay M."/>
            <person name="Keenan S."/>
            <person name="Kershaw J.K."/>
            <person name="Kimberley A.M."/>
            <person name="King A."/>
            <person name="Knights A."/>
            <person name="Laird G.K."/>
            <person name="Langford C."/>
            <person name="Lawlor S."/>
            <person name="Leongamornlert D.A."/>
            <person name="Leversha M."/>
            <person name="Lloyd C."/>
            <person name="Lloyd D.M."/>
            <person name="Lovell J."/>
            <person name="Martin S."/>
            <person name="Mashreghi-Mohammadi M."/>
            <person name="Matthews L."/>
            <person name="McLaren S."/>
            <person name="McLay K.E."/>
            <person name="McMurray A."/>
            <person name="Milne S."/>
            <person name="Nickerson T."/>
            <person name="Nisbett J."/>
            <person name="Nordsiek G."/>
            <person name="Pearce A.V."/>
            <person name="Peck A.I."/>
            <person name="Porter K.M."/>
            <person name="Pandian R."/>
            <person name="Pelan S."/>
            <person name="Phillimore B."/>
            <person name="Povey S."/>
            <person name="Ramsey Y."/>
            <person name="Rand V."/>
            <person name="Scharfe M."/>
            <person name="Sehra H.K."/>
            <person name="Shownkeen R."/>
            <person name="Sims S.K."/>
            <person name="Skuce C.D."/>
            <person name="Smith M."/>
            <person name="Steward C.A."/>
            <person name="Swarbreck D."/>
            <person name="Sycamore N."/>
            <person name="Tester J."/>
            <person name="Thorpe A."/>
            <person name="Tracey A."/>
            <person name="Tromans A."/>
            <person name="Thomas D.W."/>
            <person name="Wall M."/>
            <person name="Wallis J.M."/>
            <person name="West A.P."/>
            <person name="Whitehead S.L."/>
            <person name="Willey D.L."/>
            <person name="Williams S.A."/>
            <person name="Wilming L."/>
            <person name="Wray P.W."/>
            <person name="Young L."/>
            <person name="Ashurst J.L."/>
            <person name="Coulson A."/>
            <person name="Blocker H."/>
            <person name="Durbin R.M."/>
            <person name="Sulston J.E."/>
            <person name="Hubbard T."/>
            <person name="Jackson M.J."/>
            <person name="Bentley D.R."/>
            <person name="Beck S."/>
            <person name="Rogers J."/>
            <person name="Dunham I."/>
        </authorList>
    </citation>
    <scope>NUCLEOTIDE SEQUENCE [LARGE SCALE GENOMIC DNA]</scope>
</reference>
<reference key="3">
    <citation type="journal article" date="2004" name="Genome Res.">
        <title>The status, quality, and expansion of the NIH full-length cDNA project: the Mammalian Gene Collection (MGC).</title>
        <authorList>
            <consortium name="The MGC Project Team"/>
        </authorList>
    </citation>
    <scope>NUCLEOTIDE SEQUENCE [LARGE SCALE MRNA]</scope>
    <source>
        <tissue>Duodenum</tissue>
    </source>
</reference>
<reference key="4">
    <citation type="journal article" date="2008" name="Mol. Cell">
        <title>Kinase-selective enrichment enables quantitative phosphoproteomics of the kinome across the cell cycle.</title>
        <authorList>
            <person name="Daub H."/>
            <person name="Olsen J.V."/>
            <person name="Bairlein M."/>
            <person name="Gnad F."/>
            <person name="Oppermann F.S."/>
            <person name="Korner R."/>
            <person name="Greff Z."/>
            <person name="Keri G."/>
            <person name="Stemmann O."/>
            <person name="Mann M."/>
        </authorList>
    </citation>
    <scope>IDENTIFICATION BY MASS SPECTROMETRY [LARGE SCALE ANALYSIS]</scope>
    <source>
        <tissue>Cervix carcinoma</tissue>
    </source>
</reference>
<reference key="5">
    <citation type="journal article" date="2008" name="Proc. Natl. Acad. Sci. U.S.A.">
        <title>A quantitative atlas of mitotic phosphorylation.</title>
        <authorList>
            <person name="Dephoure N."/>
            <person name="Zhou C."/>
            <person name="Villen J."/>
            <person name="Beausoleil S.A."/>
            <person name="Bakalarski C.E."/>
            <person name="Elledge S.J."/>
            <person name="Gygi S.P."/>
        </authorList>
    </citation>
    <scope>IDENTIFICATION BY MASS SPECTROMETRY [LARGE SCALE ANALYSIS]</scope>
    <source>
        <tissue>Cervix carcinoma</tissue>
    </source>
</reference>
<reference key="6">
    <citation type="journal article" date="2009" name="Anal. Chem.">
        <title>Lys-N and trypsin cover complementary parts of the phosphoproteome in a refined SCX-based approach.</title>
        <authorList>
            <person name="Gauci S."/>
            <person name="Helbig A.O."/>
            <person name="Slijper M."/>
            <person name="Krijgsveld J."/>
            <person name="Heck A.J."/>
            <person name="Mohammed S."/>
        </authorList>
    </citation>
    <scope>IDENTIFICATION BY MASS SPECTROMETRY [LARGE SCALE ANALYSIS]</scope>
</reference>
<reference key="7">
    <citation type="journal article" date="2009" name="Sci. Signal.">
        <title>Quantitative phosphoproteomic analysis of T cell receptor signaling reveals system-wide modulation of protein-protein interactions.</title>
        <authorList>
            <person name="Mayya V."/>
            <person name="Lundgren D.H."/>
            <person name="Hwang S.-I."/>
            <person name="Rezaul K."/>
            <person name="Wu L."/>
            <person name="Eng J.K."/>
            <person name="Rodionov V."/>
            <person name="Han D.K."/>
        </authorList>
    </citation>
    <scope>PHOSPHORYLATION [LARGE SCALE ANALYSIS] AT SER-69</scope>
    <scope>IDENTIFICATION BY MASS SPECTROMETRY [LARGE SCALE ANALYSIS]</scope>
    <source>
        <tissue>Leukemic T-cell</tissue>
    </source>
</reference>
<reference key="8">
    <citation type="journal article" date="2010" name="Sci. Signal.">
        <title>Quantitative phosphoproteomics reveals widespread full phosphorylation site occupancy during mitosis.</title>
        <authorList>
            <person name="Olsen J.V."/>
            <person name="Vermeulen M."/>
            <person name="Santamaria A."/>
            <person name="Kumar C."/>
            <person name="Miller M.L."/>
            <person name="Jensen L.J."/>
            <person name="Gnad F."/>
            <person name="Cox J."/>
            <person name="Jensen T.S."/>
            <person name="Nigg E.A."/>
            <person name="Brunak S."/>
            <person name="Mann M."/>
        </authorList>
    </citation>
    <scope>PHOSPHORYLATION [LARGE SCALE ANALYSIS] AT SER-69</scope>
    <scope>IDENTIFICATION BY MASS SPECTROMETRY [LARGE SCALE ANALYSIS]</scope>
    <source>
        <tissue>Cervix carcinoma</tissue>
    </source>
</reference>
<reference key="9">
    <citation type="journal article" date="2013" name="J. Proteome Res.">
        <title>Toward a comprehensive characterization of a human cancer cell phosphoproteome.</title>
        <authorList>
            <person name="Zhou H."/>
            <person name="Di Palma S."/>
            <person name="Preisinger C."/>
            <person name="Peng M."/>
            <person name="Polat A.N."/>
            <person name="Heck A.J."/>
            <person name="Mohammed S."/>
        </authorList>
    </citation>
    <scope>PHOSPHORYLATION [LARGE SCALE ANALYSIS] AT SER-69</scope>
    <scope>IDENTIFICATION BY MASS SPECTROMETRY [LARGE SCALE ANALYSIS]</scope>
    <source>
        <tissue>Cervix carcinoma</tissue>
        <tissue>Erythroleukemia</tissue>
    </source>
</reference>
<reference key="10">
    <citation type="journal article" date="2014" name="J. Proteomics">
        <title>An enzyme assisted RP-RPLC approach for in-depth analysis of human liver phosphoproteome.</title>
        <authorList>
            <person name="Bian Y."/>
            <person name="Song C."/>
            <person name="Cheng K."/>
            <person name="Dong M."/>
            <person name="Wang F."/>
            <person name="Huang J."/>
            <person name="Sun D."/>
            <person name="Wang L."/>
            <person name="Ye M."/>
            <person name="Zou H."/>
        </authorList>
    </citation>
    <scope>PHOSPHORYLATION [LARGE SCALE ANALYSIS] AT SER-76</scope>
    <scope>IDENTIFICATION BY MASS SPECTROMETRY [LARGE SCALE ANALYSIS]</scope>
    <source>
        <tissue>Liver</tissue>
    </source>
</reference>